<sequence>MAALSCLLDSVRRDIKKVDRELRQLRCIDEISSRCLCDLYMHPYCCCDLHPYPYCLCYSKRSRSCGLCDLYYPCCLCDYKLYCLRPSLRSLERLRRTTNRILASSCCSSNILGSVNVCGFEPDQVKVRVKDGKVCVSAERENRYDCLGSKKYSYMNICKEFSLPPCVDEKDVTYSYGLGSCVKIESPCYPCTSPCNPCNPCSPCSPCGPCGPCGPCGPCGPCGPCDPCNPCYPCGSRFSCRKMIL</sequence>
<gene>
    <name type="primary">Odf1</name>
    <name type="synonym">Odf27</name>
    <name type="synonym">Odfp</name>
    <name type="synonym">Rt7</name>
</gene>
<dbReference type="EMBL" id="M88759">
    <property type="protein sequence ID" value="AAA03066.1"/>
    <property type="molecule type" value="mRNA"/>
</dbReference>
<dbReference type="EMBL" id="M88762">
    <property type="protein sequence ID" value="AAA42091.1"/>
    <property type="status" value="ALT_INIT"/>
    <property type="molecule type" value="Genomic_DNA"/>
</dbReference>
<dbReference type="EMBL" id="M88762">
    <property type="protein sequence ID" value="AAA42092.1"/>
    <property type="status" value="ALT_SEQ"/>
    <property type="molecule type" value="Genomic_DNA"/>
</dbReference>
<dbReference type="EMBL" id="BC078708">
    <property type="protein sequence ID" value="AAH78708.1"/>
    <property type="molecule type" value="mRNA"/>
</dbReference>
<dbReference type="EMBL" id="U09021">
    <property type="protein sequence ID" value="AAA67872.1"/>
    <property type="molecule type" value="mRNA"/>
</dbReference>
<dbReference type="EMBL" id="M58677">
    <property type="protein sequence ID" value="AAA42086.1"/>
    <property type="molecule type" value="mRNA"/>
</dbReference>
<dbReference type="PIR" id="A43905">
    <property type="entry name" value="A43905"/>
</dbReference>
<dbReference type="RefSeq" id="NP_077040.2">
    <property type="nucleotide sequence ID" value="NM_024126.5"/>
</dbReference>
<dbReference type="SMR" id="P21769"/>
<dbReference type="FunCoup" id="P21769">
    <property type="interactions" value="18"/>
</dbReference>
<dbReference type="STRING" id="10116.ENSRNOP00000008700"/>
<dbReference type="iPTMnet" id="P21769"/>
<dbReference type="PhosphoSitePlus" id="P21769"/>
<dbReference type="PaxDb" id="10116-ENSRNOP00000008700"/>
<dbReference type="GeneID" id="24610"/>
<dbReference type="KEGG" id="rno:24610"/>
<dbReference type="UCSC" id="RGD:3228">
    <property type="organism name" value="rat"/>
</dbReference>
<dbReference type="AGR" id="RGD:3228"/>
<dbReference type="CTD" id="4956"/>
<dbReference type="RGD" id="3228">
    <property type="gene designation" value="Odf1"/>
</dbReference>
<dbReference type="VEuPathDB" id="HostDB:ENSRNOG00000006578"/>
<dbReference type="eggNOG" id="ENOG502S68A">
    <property type="taxonomic scope" value="Eukaryota"/>
</dbReference>
<dbReference type="HOGENOM" id="CLU_076121_0_0_1"/>
<dbReference type="InParanoid" id="P21769"/>
<dbReference type="OrthoDB" id="1431247at2759"/>
<dbReference type="PhylomeDB" id="P21769"/>
<dbReference type="TreeFam" id="TF337986"/>
<dbReference type="PRO" id="PR:P21769"/>
<dbReference type="Proteomes" id="UP000002494">
    <property type="component" value="Chromosome 7"/>
</dbReference>
<dbReference type="Bgee" id="ENSRNOG00000006578">
    <property type="expression patterns" value="Expressed in testis and 8 other cell types or tissues"/>
</dbReference>
<dbReference type="GO" id="GO:0005813">
    <property type="term" value="C:centrosome"/>
    <property type="evidence" value="ECO:0007669"/>
    <property type="project" value="UniProtKB-SubCell"/>
</dbReference>
<dbReference type="GO" id="GO:0005737">
    <property type="term" value="C:cytoplasm"/>
    <property type="evidence" value="ECO:0007669"/>
    <property type="project" value="UniProtKB-KW"/>
</dbReference>
<dbReference type="GO" id="GO:0002177">
    <property type="term" value="C:manchette"/>
    <property type="evidence" value="ECO:0000250"/>
    <property type="project" value="UniProtKB"/>
</dbReference>
<dbReference type="GO" id="GO:0001520">
    <property type="term" value="C:outer dense fiber"/>
    <property type="evidence" value="ECO:0000266"/>
    <property type="project" value="RGD"/>
</dbReference>
<dbReference type="GO" id="GO:0036126">
    <property type="term" value="C:sperm flagellum"/>
    <property type="evidence" value="ECO:0000250"/>
    <property type="project" value="UniProtKB"/>
</dbReference>
<dbReference type="GO" id="GO:0019904">
    <property type="term" value="F:protein domain specific binding"/>
    <property type="evidence" value="ECO:0000353"/>
    <property type="project" value="RGD"/>
</dbReference>
<dbReference type="GO" id="GO:0030154">
    <property type="term" value="P:cell differentiation"/>
    <property type="evidence" value="ECO:0007669"/>
    <property type="project" value="UniProtKB-KW"/>
</dbReference>
<dbReference type="GO" id="GO:0007283">
    <property type="term" value="P:spermatogenesis"/>
    <property type="evidence" value="ECO:0007669"/>
    <property type="project" value="UniProtKB-KW"/>
</dbReference>
<dbReference type="CDD" id="cd06482">
    <property type="entry name" value="ACD_HspB10"/>
    <property type="match status" value="1"/>
</dbReference>
<dbReference type="Gene3D" id="2.60.40.790">
    <property type="match status" value="1"/>
</dbReference>
<dbReference type="InterPro" id="IPR002068">
    <property type="entry name" value="A-crystallin/Hsp20_dom"/>
</dbReference>
<dbReference type="InterPro" id="IPR008978">
    <property type="entry name" value="HSP20-like_chaperone"/>
</dbReference>
<dbReference type="InterPro" id="IPR037552">
    <property type="entry name" value="ODF1_ACD"/>
</dbReference>
<dbReference type="InterPro" id="IPR037389">
    <property type="entry name" value="ODFP"/>
</dbReference>
<dbReference type="PANTHER" id="PTHR17125">
    <property type="entry name" value="OUTER DENSE FIBER PROTEIN 1"/>
    <property type="match status" value="1"/>
</dbReference>
<dbReference type="PANTHER" id="PTHR17125:SF2">
    <property type="entry name" value="OUTER DENSE FIBER PROTEIN 1"/>
    <property type="match status" value="1"/>
</dbReference>
<dbReference type="Pfam" id="PF00011">
    <property type="entry name" value="HSP20"/>
    <property type="match status" value="1"/>
</dbReference>
<dbReference type="SUPFAM" id="SSF49764">
    <property type="entry name" value="HSP20-like chaperones"/>
    <property type="match status" value="1"/>
</dbReference>
<reference key="1">
    <citation type="journal article" date="1991" name="Dev. Biol.">
        <title>Sequence and developmental expression of a mRNA encoding a putative protein of rat sperm outer dense fibers.</title>
        <authorList>
            <person name="Burfeind P."/>
            <person name="Hoyer-Fender S."/>
        </authorList>
    </citation>
    <scope>NUCLEOTIDE SEQUENCE [MRNA]</scope>
    <source>
        <tissue>Testis</tissue>
    </source>
</reference>
<reference key="2">
    <citation type="journal article" date="1993" name="Eur. J. Biochem.">
        <title>Structure and chromosomal assignment of a gene encoding the major protein of rat sperm outer dense fibres.</title>
        <authorList>
            <person name="Burfeind P."/>
            <person name="Belgardt B."/>
            <person name="Szpirer C."/>
            <person name="Hoyer-Fender S."/>
        </authorList>
    </citation>
    <scope>NUCLEOTIDE SEQUENCE [GENOMIC DNA / MRNA]</scope>
    <source>
        <strain>Wistar</strain>
        <tissue>Spleen</tissue>
        <tissue>Testis</tissue>
    </source>
</reference>
<reference key="3">
    <citation type="journal article" date="2004" name="Genome Res.">
        <title>The status, quality, and expansion of the NIH full-length cDNA project: the Mammalian Gene Collection (MGC).</title>
        <authorList>
            <consortium name="The MGC Project Team"/>
        </authorList>
    </citation>
    <scope>NUCLEOTIDE SEQUENCE [LARGE SCALE MRNA]</scope>
    <source>
        <tissue>Testis</tissue>
    </source>
</reference>
<reference key="4">
    <citation type="journal article" date="1994" name="Mol. Reprod. Dev.">
        <title>Molecular cloning and developmental expression of an mRNA encoding the 27 kDa outer dense fiber protein of rat spermatozoa.</title>
        <authorList>
            <person name="Morales C.R."/>
            <person name="Oko R."/>
            <person name="Clermont Y."/>
        </authorList>
    </citation>
    <scope>NUCLEOTIDE SEQUENCE [MRNA] OF 81-245</scope>
    <scope>PROTEIN SEQUENCE OF 50-52 AND 156-165</scope>
    <source>
        <tissue>Testis</tissue>
    </source>
</reference>
<reference key="5">
    <citation type="journal article" date="1990" name="Dev. Biol.">
        <title>A new rat gene RT7 is specifically expressed during spermatogenesis.</title>
        <authorList>
            <person name="van der Hoorn F.A."/>
            <person name="Tarnasky H.A."/>
            <person name="Nordeen S.K."/>
        </authorList>
    </citation>
    <scope>NUCLEOTIDE SEQUENCE [MRNA] OF 1-90</scope>
    <source>
        <tissue>Testis</tissue>
    </source>
</reference>
<reference key="6">
    <citation type="journal article" date="1999" name="Dev. Biol.">
        <title>Spag4, a novel sperm protein, binds outer dense-fiber protein Odf1 and localizes to microtubules of manchette and axoneme.</title>
        <authorList>
            <person name="Shao X."/>
            <person name="Tarnasky H.A."/>
            <person name="Lee J.P."/>
            <person name="Oko R."/>
            <person name="van der Hoorn F.A."/>
        </authorList>
    </citation>
    <scope>INTERACTION WITH SPAG4</scope>
</reference>
<reference key="7">
    <citation type="journal article" date="2003" name="J. Biol. Chem.">
        <title>Association of kinesin light chain with outer dense fibers in a microtubule-independent fashion.</title>
        <authorList>
            <person name="Bhullar B."/>
            <person name="Zhang Y."/>
            <person name="Junco A."/>
            <person name="Oko R."/>
            <person name="van der Hoorn F.A."/>
        </authorList>
    </citation>
    <scope>INTERACTION WITH KLC3</scope>
</reference>
<reference key="8">
    <citation type="journal article" date="2012" name="Nat. Commun.">
        <title>Quantitative maps of protein phosphorylation sites across 14 different rat organs and tissues.</title>
        <authorList>
            <person name="Lundby A."/>
            <person name="Secher A."/>
            <person name="Lage K."/>
            <person name="Nordsborg N.B."/>
            <person name="Dmytriyev A."/>
            <person name="Lundby C."/>
            <person name="Olsen J.V."/>
        </authorList>
    </citation>
    <scope>PHOSPHORYLATION [LARGE SCALE ANALYSIS] AT SER-5; SER-10; SER-64; SER-87; SER-108; SER-109; SER-137; SER-153; SER-175 AND SER-180</scope>
    <scope>IDENTIFICATION BY MASS SPECTROMETRY [LARGE SCALE ANALYSIS]</scope>
</reference>
<proteinExistence type="evidence at protein level"/>
<organism>
    <name type="scientific">Rattus norvegicus</name>
    <name type="common">Rat</name>
    <dbReference type="NCBI Taxonomy" id="10116"/>
    <lineage>
        <taxon>Eukaryota</taxon>
        <taxon>Metazoa</taxon>
        <taxon>Chordata</taxon>
        <taxon>Craniata</taxon>
        <taxon>Vertebrata</taxon>
        <taxon>Euteleostomi</taxon>
        <taxon>Mammalia</taxon>
        <taxon>Eutheria</taxon>
        <taxon>Euarchontoglires</taxon>
        <taxon>Glires</taxon>
        <taxon>Rodentia</taxon>
        <taxon>Myomorpha</taxon>
        <taxon>Muroidea</taxon>
        <taxon>Muridae</taxon>
        <taxon>Murinae</taxon>
        <taxon>Rattus</taxon>
    </lineage>
</organism>
<feature type="chain" id="PRO_0000058027" description="Outer dense fiber protein 1">
    <location>
        <begin position="1"/>
        <end position="245"/>
    </location>
</feature>
<feature type="repeat" description="1">
    <location>
        <begin position="34"/>
        <end position="38"/>
    </location>
</feature>
<feature type="repeat" description="2">
    <location>
        <begin position="74"/>
        <end position="78"/>
    </location>
</feature>
<feature type="region of interest" description="2 X 5 AA repeats of [RC]-C-L-C-D">
    <location>
        <begin position="34"/>
        <end position="78"/>
    </location>
</feature>
<feature type="region of interest" description="C-X-P repeat region">
    <location>
        <begin position="195"/>
        <end position="233"/>
    </location>
</feature>
<feature type="modified residue" description="Phosphoserine" evidence="6">
    <location>
        <position position="5"/>
    </location>
</feature>
<feature type="modified residue" description="Phosphoserine" evidence="6">
    <location>
        <position position="10"/>
    </location>
</feature>
<feature type="modified residue" description="Phosphoserine" evidence="6">
    <location>
        <position position="64"/>
    </location>
</feature>
<feature type="modified residue" description="Phosphoserine" evidence="6">
    <location>
        <position position="87"/>
    </location>
</feature>
<feature type="modified residue" description="Phosphoserine" evidence="6">
    <location>
        <position position="108"/>
    </location>
</feature>
<feature type="modified residue" description="Phosphoserine" evidence="6">
    <location>
        <position position="109"/>
    </location>
</feature>
<feature type="modified residue" description="Phosphoserine" evidence="6">
    <location>
        <position position="137"/>
    </location>
</feature>
<feature type="modified residue" description="Phosphoserine" evidence="6">
    <location>
        <position position="153"/>
    </location>
</feature>
<feature type="modified residue" description="Phosphoserine" evidence="6">
    <location>
        <position position="175"/>
    </location>
</feature>
<feature type="modified residue" description="Phosphoserine" evidence="6">
    <location>
        <position position="180"/>
    </location>
</feature>
<feature type="sequence conflict" description="In Ref. 5; AAA42086." evidence="5" ref="5">
    <original>LRS</original>
    <variation>SAA</variation>
    <location>
        <begin position="88"/>
        <end position="90"/>
    </location>
</feature>
<name>ODFP1_RAT</name>
<protein>
    <recommendedName>
        <fullName>Outer dense fiber protein 1</fullName>
    </recommendedName>
    <alternativeName>
        <fullName>Protein RT7</fullName>
    </alternativeName>
    <alternativeName>
        <fullName>RTS 5/1</fullName>
    </alternativeName>
</protein>
<accession>P21769</accession>
<accession>Q62652</accession>
<accession>Q63390</accession>
<accession>Q63534</accession>
<accession>Q63535</accession>
<evidence type="ECO:0000250" key="1">
    <source>
        <dbReference type="UniProtKB" id="Q14990"/>
    </source>
</evidence>
<evidence type="ECO:0000250" key="2">
    <source>
        <dbReference type="UniProtKB" id="Q61999"/>
    </source>
</evidence>
<evidence type="ECO:0000269" key="3">
    <source>
    </source>
</evidence>
<evidence type="ECO:0000269" key="4">
    <source>
    </source>
</evidence>
<evidence type="ECO:0000305" key="5"/>
<evidence type="ECO:0007744" key="6">
    <source>
    </source>
</evidence>
<comment type="function">
    <text>Component of the outer dense fibers (ODF) of spermatozoa. ODF are filamentous structures located on the outside of the axoneme in the midpiece and principal piece of the mammalian sperm tail and may help to maintain the passive elastic structures and elastic recoil of the sperm tail.</text>
</comment>
<comment type="subunit">
    <text evidence="1 2 3 4">Interacts (via leucine zipper motif) with TCP11 (By similarity). Interacts with SPAG4 (PubMed:10373309). Interacts with KLC3 (PubMed:12594206). Interacts with CCDC42 (By similarity).</text>
</comment>
<comment type="subcellular location">
    <subcellularLocation>
        <location evidence="2">Cell projection</location>
        <location evidence="2">Cilium</location>
        <location evidence="2">Flagellum</location>
    </subcellularLocation>
    <subcellularLocation>
        <location evidence="2">Cytoplasm</location>
        <location evidence="2">Cytoskeleton</location>
    </subcellularLocation>
    <subcellularLocation>
        <location evidence="2">Cytoplasm</location>
        <location evidence="2">Cytoskeleton</location>
        <location evidence="2">Microtubule organizing center</location>
        <location evidence="2">Centrosome</location>
    </subcellularLocation>
    <text evidence="2">Localizes to the manchette in elongating spermatids and to the sperm flagellum.</text>
</comment>
<comment type="tissue specificity">
    <text>Testis. Specifically located to the round spermatid layer and to the luminally-oriented cytoplasm of elongated spermatids.</text>
</comment>
<comment type="developmental stage">
    <text>First detected in 30-day old rats after which, levels increase during spermatid elongation. Levels decrease at the time of spermatid assembly and disappear just before spermiation.</text>
</comment>
<comment type="domain">
    <text>The C-terminal contains many C-X-P repeats.</text>
</comment>
<comment type="sequence caution" evidence="5">
    <conflict type="erroneous initiation">
        <sequence resource="EMBL-CDS" id="AAA42091"/>
    </conflict>
</comment>
<keyword id="KW-0966">Cell projection</keyword>
<keyword id="KW-0969">Cilium</keyword>
<keyword id="KW-0963">Cytoplasm</keyword>
<keyword id="KW-0206">Cytoskeleton</keyword>
<keyword id="KW-0217">Developmental protein</keyword>
<keyword id="KW-0221">Differentiation</keyword>
<keyword id="KW-0903">Direct protein sequencing</keyword>
<keyword id="KW-0282">Flagellum</keyword>
<keyword id="KW-0597">Phosphoprotein</keyword>
<keyword id="KW-1185">Reference proteome</keyword>
<keyword id="KW-0677">Repeat</keyword>
<keyword id="KW-0744">Spermatogenesis</keyword>